<comment type="function">
    <text evidence="1">Subunit of the V1 complex of vacuolar(H+)-ATPase (V-ATPase), a multisubunit enzyme composed of a peripheral complex (V1) that hydrolyzes ATP and a membrane integral complex (V0) that translocates protons. V-ATPase is responsible for acidifying and maintaining the pH of intracellular compartments and in some cell types, is targeted to the plasma membrane, where it is responsible for acidifying the extracellular environment.</text>
</comment>
<comment type="subunit">
    <text evidence="1">V-ATPase is a heteromultimeric enzyme made up of two complexes: the ATP-hydrolytic V1 complex and the proton translocation V0 complex. The V1 complex consists of three catalytic AB heterodimers that form a heterohexamer, three peripheral stalks each consisting of EG heterodimers, one central rotor including subunits D and F, and the regulatory subunits C and H. The proton translocation complex V0 consists of the proton transport subunit a, a ring of proteolipid subunits c9c'', rotary subunit d, subunits e and f, and the accessory subunits ATP6AP1/Ac45 and ATP6AP2/PRR.</text>
</comment>
<comment type="tissue specificity">
    <text evidence="2">Testis specific.</text>
</comment>
<comment type="similarity">
    <text evidence="3">Belongs to the V-ATPase E subunit family.</text>
</comment>
<feature type="chain" id="PRO_0000282345" description="V-type proton ATPase subunit E 2">
    <location>
        <begin position="1"/>
        <end position="226"/>
    </location>
</feature>
<feature type="sequence conflict" description="In Ref. 3; AAH61059." evidence="3" ref="3">
    <original>D</original>
    <variation>G</variation>
    <location>
        <position position="55"/>
    </location>
</feature>
<proteinExistence type="evidence at protein level"/>
<organism>
    <name type="scientific">Mus musculus</name>
    <name type="common">Mouse</name>
    <dbReference type="NCBI Taxonomy" id="10090"/>
    <lineage>
        <taxon>Eukaryota</taxon>
        <taxon>Metazoa</taxon>
        <taxon>Chordata</taxon>
        <taxon>Craniata</taxon>
        <taxon>Vertebrata</taxon>
        <taxon>Euteleostomi</taxon>
        <taxon>Mammalia</taxon>
        <taxon>Eutheria</taxon>
        <taxon>Euarchontoglires</taxon>
        <taxon>Glires</taxon>
        <taxon>Rodentia</taxon>
        <taxon>Myomorpha</taxon>
        <taxon>Muroidea</taxon>
        <taxon>Muridae</taxon>
        <taxon>Murinae</taxon>
        <taxon>Mus</taxon>
        <taxon>Mus</taxon>
    </lineage>
</organism>
<name>VATE2_MOUSE</name>
<dbReference type="EMBL" id="AB074757">
    <property type="protein sequence ID" value="BAB92083.1"/>
    <property type="molecule type" value="mRNA"/>
</dbReference>
<dbReference type="EMBL" id="AK015654">
    <property type="protein sequence ID" value="BAB29919.1"/>
    <property type="molecule type" value="mRNA"/>
</dbReference>
<dbReference type="EMBL" id="BC049547">
    <property type="protein sequence ID" value="AAH49547.2"/>
    <property type="molecule type" value="mRNA"/>
</dbReference>
<dbReference type="EMBL" id="BC061059">
    <property type="protein sequence ID" value="AAH61059.1"/>
    <property type="molecule type" value="mRNA"/>
</dbReference>
<dbReference type="CCDS" id="CCDS29009.1"/>
<dbReference type="RefSeq" id="NP_083397.3">
    <property type="nucleotide sequence ID" value="NM_029121.3"/>
</dbReference>
<dbReference type="SMR" id="Q9D593"/>
<dbReference type="BioGRID" id="217076">
    <property type="interactions" value="2"/>
</dbReference>
<dbReference type="FunCoup" id="Q9D593">
    <property type="interactions" value="895"/>
</dbReference>
<dbReference type="IntAct" id="Q9D593">
    <property type="interactions" value="1"/>
</dbReference>
<dbReference type="MINT" id="Q9D593"/>
<dbReference type="STRING" id="10090.ENSMUSP00000157221"/>
<dbReference type="TCDB" id="3.A.2.2.6">
    <property type="family name" value="the h+- or na+-translocating f-type, v-type and a-type atpase (f-atpase) superfamily"/>
</dbReference>
<dbReference type="iPTMnet" id="Q9D593"/>
<dbReference type="PhosphoSitePlus" id="Q9D593"/>
<dbReference type="jPOST" id="Q9D593"/>
<dbReference type="PaxDb" id="10090-ENSMUSP00000065285"/>
<dbReference type="PeptideAtlas" id="Q9D593"/>
<dbReference type="ProteomicsDB" id="297975"/>
<dbReference type="Antibodypedia" id="51230">
    <property type="antibodies" value="105 antibodies from 21 providers"/>
</dbReference>
<dbReference type="DNASU" id="74915"/>
<dbReference type="Ensembl" id="ENSMUST00000065758.8">
    <property type="protein sequence ID" value="ENSMUSP00000065285.8"/>
    <property type="gene ID" value="ENSMUSG00000053375.9"/>
</dbReference>
<dbReference type="Ensembl" id="ENSMUST00000233995.2">
    <property type="protein sequence ID" value="ENSMUSP00000157221.2"/>
    <property type="gene ID" value="ENSMUSG00000053375.9"/>
</dbReference>
<dbReference type="Ensembl" id="ENSMUST00000235110.2">
    <property type="protein sequence ID" value="ENSMUSP00000157068.2"/>
    <property type="gene ID" value="ENSMUSG00000053375.9"/>
</dbReference>
<dbReference type="GeneID" id="74915"/>
<dbReference type="KEGG" id="mmu:74915"/>
<dbReference type="UCSC" id="uc008dul.1">
    <property type="organism name" value="mouse"/>
</dbReference>
<dbReference type="AGR" id="MGI:1922165"/>
<dbReference type="CTD" id="90423"/>
<dbReference type="MGI" id="MGI:1922165">
    <property type="gene designation" value="Atp6v1e2"/>
</dbReference>
<dbReference type="VEuPathDB" id="HostDB:ENSMUSG00000053375"/>
<dbReference type="eggNOG" id="KOG1664">
    <property type="taxonomic scope" value="Eukaryota"/>
</dbReference>
<dbReference type="GeneTree" id="ENSGT00390000002730"/>
<dbReference type="HOGENOM" id="CLU_073641_2_0_1"/>
<dbReference type="InParanoid" id="Q9D593"/>
<dbReference type="OMA" id="CRPQDHL"/>
<dbReference type="OrthoDB" id="10263003at2759"/>
<dbReference type="PhylomeDB" id="Q9D593"/>
<dbReference type="TreeFam" id="TF313479"/>
<dbReference type="Reactome" id="R-MMU-1222556">
    <property type="pathway name" value="ROS and RNS production in phagocytes"/>
</dbReference>
<dbReference type="Reactome" id="R-MMU-77387">
    <property type="pathway name" value="Insulin receptor recycling"/>
</dbReference>
<dbReference type="Reactome" id="R-MMU-917977">
    <property type="pathway name" value="Transferrin endocytosis and recycling"/>
</dbReference>
<dbReference type="Reactome" id="R-MMU-9639288">
    <property type="pathway name" value="Amino acids regulate mTORC1"/>
</dbReference>
<dbReference type="Reactome" id="R-MMU-983712">
    <property type="pathway name" value="Ion channel transport"/>
</dbReference>
<dbReference type="BioGRID-ORCS" id="74915">
    <property type="hits" value="2 hits in 78 CRISPR screens"/>
</dbReference>
<dbReference type="CD-CODE" id="CE726F99">
    <property type="entry name" value="Postsynaptic density"/>
</dbReference>
<dbReference type="ChiTaRS" id="Atp6v1e2">
    <property type="organism name" value="mouse"/>
</dbReference>
<dbReference type="PRO" id="PR:Q9D593"/>
<dbReference type="Proteomes" id="UP000000589">
    <property type="component" value="Chromosome 17"/>
</dbReference>
<dbReference type="RNAct" id="Q9D593">
    <property type="molecule type" value="protein"/>
</dbReference>
<dbReference type="Bgee" id="ENSMUSG00000053375">
    <property type="expression patterns" value="Expressed in seminiferous tubule of testis and 22 other cell types or tissues"/>
</dbReference>
<dbReference type="GO" id="GO:0001669">
    <property type="term" value="C:acrosomal vesicle"/>
    <property type="evidence" value="ECO:0000314"/>
    <property type="project" value="MGI"/>
</dbReference>
<dbReference type="GO" id="GO:0033178">
    <property type="term" value="C:proton-transporting two-sector ATPase complex, catalytic domain"/>
    <property type="evidence" value="ECO:0007669"/>
    <property type="project" value="InterPro"/>
</dbReference>
<dbReference type="GO" id="GO:0046961">
    <property type="term" value="F:proton-transporting ATPase activity, rotational mechanism"/>
    <property type="evidence" value="ECO:0000316"/>
    <property type="project" value="MGI"/>
</dbReference>
<dbReference type="GO" id="GO:1902600">
    <property type="term" value="P:proton transmembrane transport"/>
    <property type="evidence" value="ECO:0000316"/>
    <property type="project" value="MGI"/>
</dbReference>
<dbReference type="FunFam" id="3.30.2320.30:FF:000001">
    <property type="entry name" value="V-type proton atpase subunit e 1"/>
    <property type="match status" value="1"/>
</dbReference>
<dbReference type="Gene3D" id="6.10.250.1620">
    <property type="match status" value="1"/>
</dbReference>
<dbReference type="Gene3D" id="3.30.2320.30">
    <property type="entry name" value="ATP synthase, E subunit, C-terminal"/>
    <property type="match status" value="1"/>
</dbReference>
<dbReference type="HAMAP" id="MF_00311">
    <property type="entry name" value="ATP_synth_E_arch"/>
    <property type="match status" value="1"/>
</dbReference>
<dbReference type="InterPro" id="IPR038495">
    <property type="entry name" value="ATPase_E_C"/>
</dbReference>
<dbReference type="InterPro" id="IPR002842">
    <property type="entry name" value="ATPase_V1_Esu"/>
</dbReference>
<dbReference type="PANTHER" id="PTHR45715">
    <property type="entry name" value="ATPASE H+-TRANSPORTING V1 SUBUNIT E1A-RELATED"/>
    <property type="match status" value="1"/>
</dbReference>
<dbReference type="Pfam" id="PF01991">
    <property type="entry name" value="vATP-synt_E"/>
    <property type="match status" value="1"/>
</dbReference>
<dbReference type="SUPFAM" id="SSF160527">
    <property type="entry name" value="V-type ATPase subunit E-like"/>
    <property type="match status" value="1"/>
</dbReference>
<sequence>MALTDIDVQKQIKHMMAFIEQEANEKAEEIDAKAEEEFNIEKGRLVQTQRLKIMDYFEKKEKQIEQQKKIQLSTMRNQARITVLRARDNLILELLKDAKMRLSRIVSDEEIYQDLLDKLVLQALLRLLEPVMIVRCRPQDLHLVESAVLRAIPQYMRLCQKHLEVQVDQTEHLPSNAAGGVEVYSSDQKIKVSNTLESRLNLAAMQKMPEIRGILFGDNTSRKFFT</sequence>
<protein>
    <recommendedName>
        <fullName>V-type proton ATPase subunit E 2</fullName>
        <shortName>V-ATPase subunit E 2</shortName>
    </recommendedName>
    <alternativeName>
        <fullName>Vacuolar proton pump subunit E 2</fullName>
    </alternativeName>
</protein>
<evidence type="ECO:0000250" key="1">
    <source>
        <dbReference type="UniProtKB" id="P36543"/>
    </source>
</evidence>
<evidence type="ECO:0000269" key="2">
    <source>
    </source>
</evidence>
<evidence type="ECO:0000305" key="3"/>
<gene>
    <name type="primary">Atp6v1e2</name>
    <name type="synonym">Atp6e1</name>
</gene>
<accession>Q9D593</accession>
<accession>Q6P8U8</accession>
<accession>Q810S5</accession>
<reference key="1">
    <citation type="journal article" date="2002" name="J. Biol. Chem.">
        <title>A proton pump ATPase with testis-specific E1-subunit isoform required for acrosome acidification.</title>
        <authorList>
            <person name="Sun-Wada G.H."/>
            <person name="Imai-Senga Y."/>
            <person name="Yamamoto A."/>
            <person name="Murata Y."/>
            <person name="Hirata T."/>
            <person name="Wada Y."/>
            <person name="Futai M."/>
        </authorList>
    </citation>
    <scope>NUCLEOTIDE SEQUENCE [MRNA]</scope>
    <scope>FUNCTION</scope>
    <scope>TISSUE SPECIFICITY</scope>
</reference>
<reference key="2">
    <citation type="journal article" date="2005" name="Science">
        <title>The transcriptional landscape of the mammalian genome.</title>
        <authorList>
            <person name="Carninci P."/>
            <person name="Kasukawa T."/>
            <person name="Katayama S."/>
            <person name="Gough J."/>
            <person name="Frith M.C."/>
            <person name="Maeda N."/>
            <person name="Oyama R."/>
            <person name="Ravasi T."/>
            <person name="Lenhard B."/>
            <person name="Wells C."/>
            <person name="Kodzius R."/>
            <person name="Shimokawa K."/>
            <person name="Bajic V.B."/>
            <person name="Brenner S.E."/>
            <person name="Batalov S."/>
            <person name="Forrest A.R."/>
            <person name="Zavolan M."/>
            <person name="Davis M.J."/>
            <person name="Wilming L.G."/>
            <person name="Aidinis V."/>
            <person name="Allen J.E."/>
            <person name="Ambesi-Impiombato A."/>
            <person name="Apweiler R."/>
            <person name="Aturaliya R.N."/>
            <person name="Bailey T.L."/>
            <person name="Bansal M."/>
            <person name="Baxter L."/>
            <person name="Beisel K.W."/>
            <person name="Bersano T."/>
            <person name="Bono H."/>
            <person name="Chalk A.M."/>
            <person name="Chiu K.P."/>
            <person name="Choudhary V."/>
            <person name="Christoffels A."/>
            <person name="Clutterbuck D.R."/>
            <person name="Crowe M.L."/>
            <person name="Dalla E."/>
            <person name="Dalrymple B.P."/>
            <person name="de Bono B."/>
            <person name="Della Gatta G."/>
            <person name="di Bernardo D."/>
            <person name="Down T."/>
            <person name="Engstrom P."/>
            <person name="Fagiolini M."/>
            <person name="Faulkner G."/>
            <person name="Fletcher C.F."/>
            <person name="Fukushima T."/>
            <person name="Furuno M."/>
            <person name="Futaki S."/>
            <person name="Gariboldi M."/>
            <person name="Georgii-Hemming P."/>
            <person name="Gingeras T.R."/>
            <person name="Gojobori T."/>
            <person name="Green R.E."/>
            <person name="Gustincich S."/>
            <person name="Harbers M."/>
            <person name="Hayashi Y."/>
            <person name="Hensch T.K."/>
            <person name="Hirokawa N."/>
            <person name="Hill D."/>
            <person name="Huminiecki L."/>
            <person name="Iacono M."/>
            <person name="Ikeo K."/>
            <person name="Iwama A."/>
            <person name="Ishikawa T."/>
            <person name="Jakt M."/>
            <person name="Kanapin A."/>
            <person name="Katoh M."/>
            <person name="Kawasawa Y."/>
            <person name="Kelso J."/>
            <person name="Kitamura H."/>
            <person name="Kitano H."/>
            <person name="Kollias G."/>
            <person name="Krishnan S.P."/>
            <person name="Kruger A."/>
            <person name="Kummerfeld S.K."/>
            <person name="Kurochkin I.V."/>
            <person name="Lareau L.F."/>
            <person name="Lazarevic D."/>
            <person name="Lipovich L."/>
            <person name="Liu J."/>
            <person name="Liuni S."/>
            <person name="McWilliam S."/>
            <person name="Madan Babu M."/>
            <person name="Madera M."/>
            <person name="Marchionni L."/>
            <person name="Matsuda H."/>
            <person name="Matsuzawa S."/>
            <person name="Miki H."/>
            <person name="Mignone F."/>
            <person name="Miyake S."/>
            <person name="Morris K."/>
            <person name="Mottagui-Tabar S."/>
            <person name="Mulder N."/>
            <person name="Nakano N."/>
            <person name="Nakauchi H."/>
            <person name="Ng P."/>
            <person name="Nilsson R."/>
            <person name="Nishiguchi S."/>
            <person name="Nishikawa S."/>
            <person name="Nori F."/>
            <person name="Ohara O."/>
            <person name="Okazaki Y."/>
            <person name="Orlando V."/>
            <person name="Pang K.C."/>
            <person name="Pavan W.J."/>
            <person name="Pavesi G."/>
            <person name="Pesole G."/>
            <person name="Petrovsky N."/>
            <person name="Piazza S."/>
            <person name="Reed J."/>
            <person name="Reid J.F."/>
            <person name="Ring B.Z."/>
            <person name="Ringwald M."/>
            <person name="Rost B."/>
            <person name="Ruan Y."/>
            <person name="Salzberg S.L."/>
            <person name="Sandelin A."/>
            <person name="Schneider C."/>
            <person name="Schoenbach C."/>
            <person name="Sekiguchi K."/>
            <person name="Semple C.A."/>
            <person name="Seno S."/>
            <person name="Sessa L."/>
            <person name="Sheng Y."/>
            <person name="Shibata Y."/>
            <person name="Shimada H."/>
            <person name="Shimada K."/>
            <person name="Silva D."/>
            <person name="Sinclair B."/>
            <person name="Sperling S."/>
            <person name="Stupka E."/>
            <person name="Sugiura K."/>
            <person name="Sultana R."/>
            <person name="Takenaka Y."/>
            <person name="Taki K."/>
            <person name="Tammoja K."/>
            <person name="Tan S.L."/>
            <person name="Tang S."/>
            <person name="Taylor M.S."/>
            <person name="Tegner J."/>
            <person name="Teichmann S.A."/>
            <person name="Ueda H.R."/>
            <person name="van Nimwegen E."/>
            <person name="Verardo R."/>
            <person name="Wei C.L."/>
            <person name="Yagi K."/>
            <person name="Yamanishi H."/>
            <person name="Zabarovsky E."/>
            <person name="Zhu S."/>
            <person name="Zimmer A."/>
            <person name="Hide W."/>
            <person name="Bult C."/>
            <person name="Grimmond S.M."/>
            <person name="Teasdale R.D."/>
            <person name="Liu E.T."/>
            <person name="Brusic V."/>
            <person name="Quackenbush J."/>
            <person name="Wahlestedt C."/>
            <person name="Mattick J.S."/>
            <person name="Hume D.A."/>
            <person name="Kai C."/>
            <person name="Sasaki D."/>
            <person name="Tomaru Y."/>
            <person name="Fukuda S."/>
            <person name="Kanamori-Katayama M."/>
            <person name="Suzuki M."/>
            <person name="Aoki J."/>
            <person name="Arakawa T."/>
            <person name="Iida J."/>
            <person name="Imamura K."/>
            <person name="Itoh M."/>
            <person name="Kato T."/>
            <person name="Kawaji H."/>
            <person name="Kawagashira N."/>
            <person name="Kawashima T."/>
            <person name="Kojima M."/>
            <person name="Kondo S."/>
            <person name="Konno H."/>
            <person name="Nakano K."/>
            <person name="Ninomiya N."/>
            <person name="Nishio T."/>
            <person name="Okada M."/>
            <person name="Plessy C."/>
            <person name="Shibata K."/>
            <person name="Shiraki T."/>
            <person name="Suzuki S."/>
            <person name="Tagami M."/>
            <person name="Waki K."/>
            <person name="Watahiki A."/>
            <person name="Okamura-Oho Y."/>
            <person name="Suzuki H."/>
            <person name="Kawai J."/>
            <person name="Hayashizaki Y."/>
        </authorList>
    </citation>
    <scope>NUCLEOTIDE SEQUENCE [LARGE SCALE MRNA]</scope>
    <source>
        <strain>C57BL/6J</strain>
        <tissue>Testis</tissue>
    </source>
</reference>
<reference key="3">
    <citation type="journal article" date="2004" name="Genome Res.">
        <title>The status, quality, and expansion of the NIH full-length cDNA project: the Mammalian Gene Collection (MGC).</title>
        <authorList>
            <consortium name="The MGC Project Team"/>
        </authorList>
    </citation>
    <scope>NUCLEOTIDE SEQUENCE [LARGE SCALE MRNA]</scope>
    <source>
        <tissue>Testis</tissue>
    </source>
</reference>
<reference key="4">
    <citation type="journal article" date="2010" name="Cell">
        <title>A tissue-specific atlas of mouse protein phosphorylation and expression.</title>
        <authorList>
            <person name="Huttlin E.L."/>
            <person name="Jedrychowski M.P."/>
            <person name="Elias J.E."/>
            <person name="Goswami T."/>
            <person name="Rad R."/>
            <person name="Beausoleil S.A."/>
            <person name="Villen J."/>
            <person name="Haas W."/>
            <person name="Sowa M.E."/>
            <person name="Gygi S.P."/>
        </authorList>
    </citation>
    <scope>IDENTIFICATION BY MASS SPECTROMETRY [LARGE SCALE ANALYSIS]</scope>
    <source>
        <tissue>Testis</tissue>
    </source>
</reference>
<keyword id="KW-0375">Hydrogen ion transport</keyword>
<keyword id="KW-0406">Ion transport</keyword>
<keyword id="KW-1185">Reference proteome</keyword>
<keyword id="KW-0813">Transport</keyword>